<accession>A2ASZ8</accession>
<accession>A2ASZ1</accession>
<accession>A2ASZ5</accession>
<accession>A2ASZ9</accession>
<accession>Q6NXM8</accession>
<accession>Q80T78</accession>
<accession>Q8BHG0</accession>
<accession>Q8JZT8</accession>
<accession>Q8VBT4</accession>
<accession>Q99KD3</accession>
<gene>
    <name evidence="15" type="primary">Slc25a25</name>
    <name evidence="14" type="synonym">Kiaa1896</name>
    <name type="synonym">Scamc2</name>
</gene>
<sequence length="469" mass="52621">MLCLCLYVPIAGAAQTEFQYFESKGLPAELKSIFKLSVFIPSQEFSTYRQWKQKIVQAGDKDLDGQLDFEEFVHYLQDHEKKLRLVFKSLDKKNDGRIDAQEIMQSLRDLGVKISEQQAEKILKSMDKNGTMTIDWNEWRDYHLLHPVENIPEIILYWKHSTIFDVGENLTVPDEFTVEERQTGMWWRHLVAGGGAGAVSRTCTAPLDRLKVLMQVHASRSNNMCIVGGFTQMIREGGAKSLWRGNGINVLKIAPESAIKFMAYEQMKRLVGSDQETLRIHERLVAGSLAGAIAQSSIYPMEVLKTRMALRKTGQYSGMLDCARRILAKEGVAAFYKGYIPNMLGIIPYAGIDLAVYETLKNTWLQRYAVNSADPGVFVLLACGTISSTCGQLASYPLALVRTRMQAQASIEGAPEVTMSSLFKQILRTEGAFGLYRGLAPNFMKVIPAVSISYVVYENLKITLGVQSR</sequence>
<feature type="chain" id="PRO_0000317603" description="Mitochondrial adenyl nucleotide antiporter SLC25A25">
    <location>
        <begin position="1"/>
        <end position="469"/>
    </location>
</feature>
<feature type="topological domain" description="Mitochondrial intermembrane" evidence="1">
    <location>
        <begin position="1"/>
        <end position="189"/>
    </location>
</feature>
<feature type="transmembrane region" description="Helical; Name=1" evidence="3">
    <location>
        <begin position="190"/>
        <end position="207"/>
    </location>
</feature>
<feature type="topological domain" description="Mitochondrial matrix" evidence="1">
    <location>
        <begin position="208"/>
        <end position="244"/>
    </location>
</feature>
<feature type="transmembrane region" description="Helical; Name=2" evidence="3">
    <location>
        <begin position="245"/>
        <end position="264"/>
    </location>
</feature>
<feature type="topological domain" description="Mitochondrial intermembrane" evidence="1">
    <location>
        <begin position="265"/>
        <end position="287"/>
    </location>
</feature>
<feature type="transmembrane region" description="Helical; Name=3" evidence="3">
    <location>
        <begin position="288"/>
        <end position="301"/>
    </location>
</feature>
<feature type="topological domain" description="Mitochondrial matrix" evidence="1">
    <location>
        <begin position="302"/>
        <end position="337"/>
    </location>
</feature>
<feature type="transmembrane region" description="Helical; Name=4" evidence="3">
    <location>
        <begin position="338"/>
        <end position="357"/>
    </location>
</feature>
<feature type="topological domain" description="Mitochondrial intermembrane" evidence="1">
    <location>
        <begin position="358"/>
        <end position="380"/>
    </location>
</feature>
<feature type="transmembrane region" description="Helical; Name=5" evidence="3">
    <location>
        <begin position="381"/>
        <end position="398"/>
    </location>
</feature>
<feature type="topological domain" description="Mitochondrial matrix" evidence="1">
    <location>
        <begin position="399"/>
        <end position="437"/>
    </location>
</feature>
<feature type="transmembrane region" description="Helical; Name=6" evidence="3">
    <location>
        <begin position="438"/>
        <end position="457"/>
    </location>
</feature>
<feature type="topological domain" description="Mitochondrial intermembrane" evidence="1">
    <location>
        <begin position="458"/>
        <end position="469"/>
    </location>
</feature>
<feature type="domain" description="EF-hand 1" evidence="5">
    <location>
        <begin position="47"/>
        <end position="80"/>
    </location>
</feature>
<feature type="domain" description="EF-hand 2" evidence="5">
    <location>
        <begin position="78"/>
        <end position="113"/>
    </location>
</feature>
<feature type="domain" description="EF-hand 3" evidence="5">
    <location>
        <begin position="114"/>
        <end position="149"/>
    </location>
</feature>
<feature type="repeat" description="Solcar 1" evidence="4">
    <location>
        <begin position="184"/>
        <end position="270"/>
    </location>
</feature>
<feature type="repeat" description="Solcar 2" evidence="4">
    <location>
        <begin position="278"/>
        <end position="363"/>
    </location>
</feature>
<feature type="repeat" description="Solcar 3" evidence="4">
    <location>
        <begin position="375"/>
        <end position="463"/>
    </location>
</feature>
<feature type="region of interest" description="Regulatory N-terminal domain" evidence="2">
    <location>
        <begin position="1"/>
        <end position="165"/>
    </location>
</feature>
<feature type="region of interest" description="Linker region" evidence="2">
    <location>
        <begin position="151"/>
        <end position="160"/>
    </location>
</feature>
<feature type="region of interest" description="C-terminal transmembrane transporter domain" evidence="2">
    <location>
        <begin position="166"/>
        <end position="469"/>
    </location>
</feature>
<feature type="binding site" evidence="11">
    <location>
        <position position="60"/>
    </location>
    <ligand>
        <name>Ca(2+)</name>
        <dbReference type="ChEBI" id="CHEBI:29108"/>
    </ligand>
</feature>
<feature type="binding site" evidence="11">
    <location>
        <position position="62"/>
    </location>
    <ligand>
        <name>Ca(2+)</name>
        <dbReference type="ChEBI" id="CHEBI:29108"/>
    </ligand>
</feature>
<feature type="binding site" evidence="11">
    <location>
        <position position="64"/>
    </location>
    <ligand>
        <name>Ca(2+)</name>
        <dbReference type="ChEBI" id="CHEBI:29108"/>
    </ligand>
</feature>
<feature type="binding site" evidence="11">
    <location>
        <position position="66"/>
    </location>
    <ligand>
        <name>Ca(2+)</name>
        <dbReference type="ChEBI" id="CHEBI:29108"/>
    </ligand>
</feature>
<feature type="binding site" evidence="11">
    <location>
        <position position="71"/>
    </location>
    <ligand>
        <name>Ca(2+)</name>
        <dbReference type="ChEBI" id="CHEBI:29108"/>
    </ligand>
</feature>
<feature type="splice variant" id="VSP_031071" description="In isoform 2 and isoform 3." evidence="9 10">
    <original>MLCLCLYVPIAGAAQTEFQYFESKGLPAELKSIFKLSVFIPSQEFSTYRQWKQ</original>
    <variation>MVSSVLCRCVASPPPDAAATASSSASSPASVGDPCGGAVCGGPDHQLRLWSLFQTLDVNRDGGLCVNDLAVGLRRLGLHRTEGELR</variation>
    <location>
        <begin position="1"/>
        <end position="53"/>
    </location>
</feature>
<feature type="splice variant" id="VSP_031072" description="In isoform 4 and isoform 5." evidence="7 9">
    <original>MLCLCLYVPIAGAAQTEFQYFESKGLPAELKSIFKLSVFIPSQEFSTYRQWKQ</original>
    <variation>MLQTLWHFLSSFLPRAECQDSREGIDHGVRGTQAPARGDQMSTFLGKQNGRAEATEKRPTILLVVGPAEQFPK</variation>
    <location>
        <begin position="1"/>
        <end position="53"/>
    </location>
</feature>
<feature type="splice variant" id="VSP_031073" description="In isoform 3 and isoform 5." evidence="7 9">
    <original>S</original>
    <variation>RIRTGHFWGPVTY</variation>
    <location>
        <position position="125"/>
    </location>
</feature>
<dbReference type="EMBL" id="AK122568">
    <property type="protein sequence ID" value="BAC65850.1"/>
    <property type="status" value="ALT_INIT"/>
    <property type="molecule type" value="mRNA"/>
</dbReference>
<dbReference type="EMBL" id="AK049392">
    <property type="protein sequence ID" value="BAC33730.1"/>
    <property type="molecule type" value="mRNA"/>
</dbReference>
<dbReference type="EMBL" id="AK082756">
    <property type="protein sequence ID" value="BAC38604.1"/>
    <property type="molecule type" value="mRNA"/>
</dbReference>
<dbReference type="EMBL" id="AK132204">
    <property type="protein sequence ID" value="BAE21031.1"/>
    <property type="molecule type" value="mRNA"/>
</dbReference>
<dbReference type="EMBL" id="AL928710">
    <property type="protein sequence ID" value="CAM18795.1"/>
    <property type="molecule type" value="Genomic_DNA"/>
</dbReference>
<dbReference type="EMBL" id="AL928710">
    <property type="protein sequence ID" value="CAM18796.1"/>
    <property type="molecule type" value="Genomic_DNA"/>
</dbReference>
<dbReference type="EMBL" id="AL928710">
    <property type="protein sequence ID" value="CAM18797.1"/>
    <property type="molecule type" value="Genomic_DNA"/>
</dbReference>
<dbReference type="EMBL" id="AL928710">
    <property type="protein sequence ID" value="CAM18798.1"/>
    <property type="status" value="ALT_SEQ"/>
    <property type="molecule type" value="Genomic_DNA"/>
</dbReference>
<dbReference type="EMBL" id="AL928710">
    <property type="protein sequence ID" value="CAM18799.1"/>
    <property type="status" value="ALT_SEQ"/>
    <property type="molecule type" value="Genomic_DNA"/>
</dbReference>
<dbReference type="EMBL" id="AL928710">
    <property type="protein sequence ID" value="CAM18800.1"/>
    <property type="molecule type" value="Genomic_DNA"/>
</dbReference>
<dbReference type="EMBL" id="AL928710">
    <property type="protein sequence ID" value="CAM18801.1"/>
    <property type="molecule type" value="Genomic_DNA"/>
</dbReference>
<dbReference type="EMBL" id="BC004720">
    <property type="protein sequence ID" value="AAH04720.1"/>
    <property type="molecule type" value="mRNA"/>
</dbReference>
<dbReference type="EMBL" id="BC019978">
    <property type="protein sequence ID" value="AAH19978.1"/>
    <property type="status" value="ALT_INIT"/>
    <property type="molecule type" value="mRNA"/>
</dbReference>
<dbReference type="EMBL" id="BC022114">
    <property type="protein sequence ID" value="AAH22114.1"/>
    <property type="status" value="ALT_INIT"/>
    <property type="molecule type" value="mRNA"/>
</dbReference>
<dbReference type="EMBL" id="BC037109">
    <property type="protein sequence ID" value="AAH37109.1"/>
    <property type="molecule type" value="mRNA"/>
</dbReference>
<dbReference type="EMBL" id="BC066998">
    <property type="protein sequence ID" value="AAH66998.1"/>
    <property type="molecule type" value="mRNA"/>
</dbReference>
<dbReference type="CCDS" id="CCDS15915.1">
    <molecule id="A2ASZ8-3"/>
</dbReference>
<dbReference type="CCDS" id="CCDS50567.1">
    <molecule id="A2ASZ8-5"/>
</dbReference>
<dbReference type="CCDS" id="CCDS50568.1">
    <molecule id="A2ASZ8-2"/>
</dbReference>
<dbReference type="CCDS" id="CCDS71028.1">
    <molecule id="A2ASZ8-1"/>
</dbReference>
<dbReference type="CCDS" id="CCDS89474.1">
    <molecule id="A2ASZ8-4"/>
</dbReference>
<dbReference type="RefSeq" id="NP_001157829.1">
    <molecule id="A2ASZ8-2"/>
    <property type="nucleotide sequence ID" value="NM_001164357.1"/>
</dbReference>
<dbReference type="RefSeq" id="NP_001157830.1">
    <molecule id="A2ASZ8-5"/>
    <property type="nucleotide sequence ID" value="NM_001164358.1"/>
</dbReference>
<dbReference type="RefSeq" id="NP_001277487.1">
    <molecule id="A2ASZ8-1"/>
    <property type="nucleotide sequence ID" value="NM_001290558.1"/>
</dbReference>
<dbReference type="RefSeq" id="NP_001349834.1">
    <molecule id="A2ASZ8-4"/>
    <property type="nucleotide sequence ID" value="NM_001362905.1"/>
</dbReference>
<dbReference type="RefSeq" id="NP_666230.2">
    <molecule id="A2ASZ8-3"/>
    <property type="nucleotide sequence ID" value="NM_146118.3"/>
</dbReference>
<dbReference type="RefSeq" id="XP_006498017.1">
    <property type="nucleotide sequence ID" value="XM_006497954.1"/>
</dbReference>
<dbReference type="SMR" id="A2ASZ8"/>
<dbReference type="BioGRID" id="230676">
    <property type="interactions" value="3"/>
</dbReference>
<dbReference type="FunCoup" id="A2ASZ8">
    <property type="interactions" value="2056"/>
</dbReference>
<dbReference type="STRING" id="10090.ENSMUSP00000028160"/>
<dbReference type="GlyGen" id="A2ASZ8">
    <property type="glycosylation" value="1 site, 1 N-linked glycan (1 site)"/>
</dbReference>
<dbReference type="iPTMnet" id="A2ASZ8"/>
<dbReference type="PhosphoSitePlus" id="A2ASZ8"/>
<dbReference type="SwissPalm" id="A2ASZ8"/>
<dbReference type="jPOST" id="A2ASZ8"/>
<dbReference type="PaxDb" id="10090-ENSMUSP00000028160"/>
<dbReference type="ProteomicsDB" id="255492">
    <molecule id="A2ASZ8-1"/>
</dbReference>
<dbReference type="ProteomicsDB" id="255493">
    <molecule id="A2ASZ8-2"/>
</dbReference>
<dbReference type="ProteomicsDB" id="255494">
    <molecule id="A2ASZ8-3"/>
</dbReference>
<dbReference type="ProteomicsDB" id="255495">
    <molecule id="A2ASZ8-4"/>
</dbReference>
<dbReference type="ProteomicsDB" id="255496">
    <molecule id="A2ASZ8-5"/>
</dbReference>
<dbReference type="Pumba" id="A2ASZ8"/>
<dbReference type="Antibodypedia" id="17304">
    <property type="antibodies" value="144 antibodies from 22 providers"/>
</dbReference>
<dbReference type="DNASU" id="227731"/>
<dbReference type="Ensembl" id="ENSMUST00000028160.15">
    <molecule id="A2ASZ8-3"/>
    <property type="protein sequence ID" value="ENSMUSP00000028160.9"/>
    <property type="gene ID" value="ENSMUSG00000026819.16"/>
</dbReference>
<dbReference type="Ensembl" id="ENSMUST00000052119.14">
    <molecule id="A2ASZ8-5"/>
    <property type="protein sequence ID" value="ENSMUSP00000060581.8"/>
    <property type="gene ID" value="ENSMUSG00000026819.16"/>
</dbReference>
<dbReference type="Ensembl" id="ENSMUST00000113307.9">
    <molecule id="A2ASZ8-1"/>
    <property type="protein sequence ID" value="ENSMUSP00000108932.3"/>
    <property type="gene ID" value="ENSMUSG00000026819.16"/>
</dbReference>
<dbReference type="Ensembl" id="ENSMUST00000113308.8">
    <molecule id="A2ASZ8-4"/>
    <property type="protein sequence ID" value="ENSMUSP00000108933.2"/>
    <property type="gene ID" value="ENSMUSG00000026819.16"/>
</dbReference>
<dbReference type="Ensembl" id="ENSMUST00000113310.9">
    <molecule id="A2ASZ8-2"/>
    <property type="protein sequence ID" value="ENSMUSP00000108936.3"/>
    <property type="gene ID" value="ENSMUSG00000026819.16"/>
</dbReference>
<dbReference type="GeneID" id="227731"/>
<dbReference type="KEGG" id="mmu:227731"/>
<dbReference type="UCSC" id="uc008jfn.2">
    <molecule id="A2ASZ8-1"/>
    <property type="organism name" value="mouse"/>
</dbReference>
<dbReference type="UCSC" id="uc008jfo.2">
    <molecule id="A2ASZ8-5"/>
    <property type="organism name" value="mouse"/>
</dbReference>
<dbReference type="UCSC" id="uc008jfp.2">
    <molecule id="A2ASZ8-3"/>
    <property type="organism name" value="mouse"/>
</dbReference>
<dbReference type="UCSC" id="uc008jfq.2">
    <molecule id="A2ASZ8-2"/>
    <property type="organism name" value="mouse"/>
</dbReference>
<dbReference type="AGR" id="MGI:1915913"/>
<dbReference type="CTD" id="114789"/>
<dbReference type="MGI" id="MGI:1915913">
    <property type="gene designation" value="Slc25a25"/>
</dbReference>
<dbReference type="VEuPathDB" id="HostDB:ENSMUSG00000026819"/>
<dbReference type="eggNOG" id="KOG0036">
    <property type="taxonomic scope" value="Eukaryota"/>
</dbReference>
<dbReference type="GeneTree" id="ENSGT00940000157207"/>
<dbReference type="HOGENOM" id="CLU_015166_2_0_1"/>
<dbReference type="InParanoid" id="A2ASZ8"/>
<dbReference type="OMA" id="VISYAEW"/>
<dbReference type="OrthoDB" id="20386at9989"/>
<dbReference type="PhylomeDB" id="A2ASZ8"/>
<dbReference type="TreeFam" id="TF313492"/>
<dbReference type="BioGRID-ORCS" id="227731">
    <property type="hits" value="3 hits in 79 CRISPR screens"/>
</dbReference>
<dbReference type="ChiTaRS" id="Slc25a25">
    <property type="organism name" value="mouse"/>
</dbReference>
<dbReference type="PRO" id="PR:A2ASZ8"/>
<dbReference type="Proteomes" id="UP000000589">
    <property type="component" value="Chromosome 2"/>
</dbReference>
<dbReference type="RNAct" id="A2ASZ8">
    <property type="molecule type" value="protein"/>
</dbReference>
<dbReference type="Bgee" id="ENSMUSG00000026819">
    <property type="expression patterns" value="Expressed in extensor digitorum longus and 195 other cell types or tissues"/>
</dbReference>
<dbReference type="ExpressionAtlas" id="A2ASZ8">
    <property type="expression patterns" value="baseline and differential"/>
</dbReference>
<dbReference type="GO" id="GO:0005743">
    <property type="term" value="C:mitochondrial inner membrane"/>
    <property type="evidence" value="ECO:0007669"/>
    <property type="project" value="UniProtKB-SubCell"/>
</dbReference>
<dbReference type="GO" id="GO:0005739">
    <property type="term" value="C:mitochondrion"/>
    <property type="evidence" value="ECO:0000314"/>
    <property type="project" value="UniProtKB"/>
</dbReference>
<dbReference type="GO" id="GO:0140987">
    <property type="term" value="F:ATP:phosphate antiporter activity"/>
    <property type="evidence" value="ECO:0000250"/>
    <property type="project" value="UniProtKB"/>
</dbReference>
<dbReference type="GO" id="GO:0005509">
    <property type="term" value="F:calcium ion binding"/>
    <property type="evidence" value="ECO:0007669"/>
    <property type="project" value="InterPro"/>
</dbReference>
<dbReference type="GO" id="GO:0060612">
    <property type="term" value="P:adipose tissue development"/>
    <property type="evidence" value="ECO:0000315"/>
    <property type="project" value="MGI"/>
</dbReference>
<dbReference type="GO" id="GO:0046034">
    <property type="term" value="P:ATP metabolic process"/>
    <property type="evidence" value="ECO:0000315"/>
    <property type="project" value="MGI"/>
</dbReference>
<dbReference type="GO" id="GO:0070588">
    <property type="term" value="P:calcium ion transmembrane transport"/>
    <property type="evidence" value="ECO:0000315"/>
    <property type="project" value="MGI"/>
</dbReference>
<dbReference type="GO" id="GO:0043010">
    <property type="term" value="P:camera-type eye development"/>
    <property type="evidence" value="ECO:0000316"/>
    <property type="project" value="MGI"/>
</dbReference>
<dbReference type="GO" id="GO:0045333">
    <property type="term" value="P:cellular respiration"/>
    <property type="evidence" value="ECO:0000315"/>
    <property type="project" value="MGI"/>
</dbReference>
<dbReference type="GO" id="GO:0035264">
    <property type="term" value="P:multicellular organism growth"/>
    <property type="evidence" value="ECO:0000316"/>
    <property type="project" value="MGI"/>
</dbReference>
<dbReference type="GO" id="GO:0014823">
    <property type="term" value="P:response to activity"/>
    <property type="evidence" value="ECO:0000315"/>
    <property type="project" value="MGI"/>
</dbReference>
<dbReference type="GO" id="GO:0002021">
    <property type="term" value="P:response to dietary excess"/>
    <property type="evidence" value="ECO:0000315"/>
    <property type="project" value="MGI"/>
</dbReference>
<dbReference type="GO" id="GO:0032094">
    <property type="term" value="P:response to food"/>
    <property type="evidence" value="ECO:0000315"/>
    <property type="project" value="MGI"/>
</dbReference>
<dbReference type="FunFam" id="1.10.238.10:FF:000098">
    <property type="entry name" value="calcium-binding mitochondrial carrier protein SCaMC-2 isoform X1"/>
    <property type="match status" value="1"/>
</dbReference>
<dbReference type="FunFam" id="1.10.238.10:FF:000028">
    <property type="entry name" value="Putative calcium-binding mitochondrial carrier protein scamc-2"/>
    <property type="match status" value="1"/>
</dbReference>
<dbReference type="FunFam" id="1.50.40.10:FF:000003">
    <property type="entry name" value="Putative calcium-binding mitochondrial carrier protein scamc-2"/>
    <property type="match status" value="1"/>
</dbReference>
<dbReference type="Gene3D" id="1.10.238.10">
    <property type="entry name" value="EF-hand"/>
    <property type="match status" value="2"/>
</dbReference>
<dbReference type="Gene3D" id="1.50.40.10">
    <property type="entry name" value="Mitochondrial carrier domain"/>
    <property type="match status" value="1"/>
</dbReference>
<dbReference type="InterPro" id="IPR011992">
    <property type="entry name" value="EF-hand-dom_pair"/>
</dbReference>
<dbReference type="InterPro" id="IPR002048">
    <property type="entry name" value="EF_hand_dom"/>
</dbReference>
<dbReference type="InterPro" id="IPR002167">
    <property type="entry name" value="GDC-like"/>
</dbReference>
<dbReference type="InterPro" id="IPR002067">
    <property type="entry name" value="Mit_carrier"/>
</dbReference>
<dbReference type="InterPro" id="IPR018108">
    <property type="entry name" value="Mitochondrial_sb/sol_carrier"/>
</dbReference>
<dbReference type="InterPro" id="IPR023395">
    <property type="entry name" value="Mt_carrier_dom_sf"/>
</dbReference>
<dbReference type="PANTHER" id="PTHR24089">
    <property type="entry name" value="SOLUTE CARRIER FAMILY 25"/>
    <property type="match status" value="1"/>
</dbReference>
<dbReference type="Pfam" id="PF13499">
    <property type="entry name" value="EF-hand_7"/>
    <property type="match status" value="1"/>
</dbReference>
<dbReference type="Pfam" id="PF13833">
    <property type="entry name" value="EF-hand_8"/>
    <property type="match status" value="1"/>
</dbReference>
<dbReference type="Pfam" id="PF00153">
    <property type="entry name" value="Mito_carr"/>
    <property type="match status" value="3"/>
</dbReference>
<dbReference type="PRINTS" id="PR00928">
    <property type="entry name" value="GRAVESDC"/>
</dbReference>
<dbReference type="PRINTS" id="PR00926">
    <property type="entry name" value="MITOCARRIER"/>
</dbReference>
<dbReference type="SMART" id="SM00054">
    <property type="entry name" value="EFh"/>
    <property type="match status" value="3"/>
</dbReference>
<dbReference type="SUPFAM" id="SSF47473">
    <property type="entry name" value="EF-hand"/>
    <property type="match status" value="1"/>
</dbReference>
<dbReference type="SUPFAM" id="SSF103506">
    <property type="entry name" value="Mitochondrial carrier"/>
    <property type="match status" value="1"/>
</dbReference>
<dbReference type="PROSITE" id="PS50222">
    <property type="entry name" value="EF_HAND_2"/>
    <property type="match status" value="3"/>
</dbReference>
<dbReference type="PROSITE" id="PS50920">
    <property type="entry name" value="SOLCAR"/>
    <property type="match status" value="3"/>
</dbReference>
<comment type="function">
    <text evidence="6">Electroneutral antiporter that most probably mediates the transport of adenyl nucleotides through the inner mitochondrial membrane. Originally identified as an ATP-magnesium/inorganic phosphate antiporter, it could have a broader specificity for adenyl nucleotides. By regulating the mitochondrial matrix adenyl nucleotide pool could adapt to changing cellular energetic demands and indirectly regulate adenyl nucleotide-dependent metabolic pathways.</text>
</comment>
<comment type="catalytic activity">
    <reaction evidence="1">
        <text>Mg(2+)(out) + phosphate(in) + ATP(out) = Mg(2+)(in) + phosphate(out) + ATP(in)</text>
        <dbReference type="Rhea" id="RHEA:65840"/>
        <dbReference type="ChEBI" id="CHEBI:18420"/>
        <dbReference type="ChEBI" id="CHEBI:30616"/>
        <dbReference type="ChEBI" id="CHEBI:43474"/>
    </reaction>
</comment>
<comment type="activity regulation">
    <text evidence="2">Activated by an increase in cytosolic calcium levels that induce a conformational change of the N-terminal regulatory domain, uncapping the channel and allowing transport.</text>
</comment>
<comment type="subcellular location">
    <subcellularLocation>
        <location evidence="12">Mitochondrion inner membrane</location>
        <topology evidence="3">Multi-pass membrane protein</topology>
    </subcellularLocation>
</comment>
<comment type="alternative products">
    <event type="alternative splicing"/>
    <isoform>
        <id>A2ASZ8-1</id>
        <name>1</name>
        <sequence type="displayed"/>
    </isoform>
    <isoform>
        <id>A2ASZ8-2</id>
        <name>2</name>
        <sequence type="described" ref="VSP_031071"/>
    </isoform>
    <isoform>
        <id>A2ASZ8-3</id>
        <name>3</name>
        <sequence type="described" ref="VSP_031071 VSP_031073"/>
    </isoform>
    <isoform>
        <id>A2ASZ8-4</id>
        <name>4</name>
        <sequence type="described" ref="VSP_031072"/>
    </isoform>
    <isoform>
        <id>A2ASZ8-5</id>
        <name>5</name>
        <sequence type="described" ref="VSP_031072 VSP_031073"/>
    </isoform>
</comment>
<comment type="domain">
    <text evidence="2">The regulatory N-terminal domain/NTD, binds calcium in the mitochondrial intermembrane space and regulates the antiporter activity of the transmembrane domain/TMD. In absence of calcium, the apo form of the N-terminal domain is intrinsically disordered and binds to the transmembrane domain, inhibiting the transporter activity. Binding of calcium leads to a major conformational change and abolishes the interaction with the transmembrane domain and the inhibition of the transporter activity.</text>
</comment>
<comment type="domain">
    <text evidence="2">The C-terminal mitochondrial carrier domain/transmembrane domain/TMD bears the transmembrane transporter activity.</text>
</comment>
<comment type="domain">
    <text evidence="2">Linker region/H9 could directly block the transport of substrates across the transporter.</text>
</comment>
<comment type="disruption phenotype">
    <text evidence="6">Homozygous knockout mice lacking Slc25a25 are viable, born at the expected Mendelian ratio and fertile (PubMed:21296886). They display resistance to diet-induced obesity and reduced physical endurance (PubMed:21296886). Cellular metabolism is characterized by reduction in total mitochondrial and non-mitochondrial respiration, which leads to reduction in available ATP (PubMed:21296886).</text>
</comment>
<comment type="similarity">
    <text evidence="11">Belongs to the mitochondrial carrier (TC 2.A.29) family.</text>
</comment>
<comment type="sequence caution" evidence="11">
    <conflict type="erroneous initiation">
        <sequence resource="EMBL-CDS" id="AAH19978"/>
    </conflict>
</comment>
<comment type="sequence caution" evidence="11">
    <conflict type="erroneous initiation">
        <sequence resource="EMBL-CDS" id="AAH22114"/>
    </conflict>
</comment>
<comment type="sequence caution" evidence="11">
    <conflict type="erroneous initiation">
        <sequence resource="EMBL-CDS" id="BAC65850"/>
    </conflict>
</comment>
<comment type="sequence caution" evidence="11">
    <conflict type="erroneous gene model prediction">
        <sequence resource="EMBL-CDS" id="CAM18798"/>
    </conflict>
</comment>
<comment type="sequence caution" evidence="11">
    <conflict type="erroneous gene model prediction">
        <sequence resource="EMBL-CDS" id="CAM18799"/>
    </conflict>
</comment>
<evidence type="ECO:0000250" key="1">
    <source>
        <dbReference type="UniProtKB" id="Q6KCM7"/>
    </source>
</evidence>
<evidence type="ECO:0000250" key="2">
    <source>
        <dbReference type="UniProtKB" id="Q6NUK1"/>
    </source>
</evidence>
<evidence type="ECO:0000255" key="3"/>
<evidence type="ECO:0000255" key="4">
    <source>
        <dbReference type="PROSITE-ProRule" id="PRU00282"/>
    </source>
</evidence>
<evidence type="ECO:0000255" key="5">
    <source>
        <dbReference type="PROSITE-ProRule" id="PRU00448"/>
    </source>
</evidence>
<evidence type="ECO:0000269" key="6">
    <source>
    </source>
</evidence>
<evidence type="ECO:0000303" key="7">
    <source>
    </source>
</evidence>
<evidence type="ECO:0000303" key="8">
    <source>
    </source>
</evidence>
<evidence type="ECO:0000303" key="9">
    <source>
    </source>
</evidence>
<evidence type="ECO:0000303" key="10">
    <source>
    </source>
</evidence>
<evidence type="ECO:0000305" key="11"/>
<evidence type="ECO:0000305" key="12">
    <source>
    </source>
</evidence>
<evidence type="ECO:0000305" key="13">
    <source>
    </source>
</evidence>
<evidence type="ECO:0000312" key="14">
    <source>
        <dbReference type="EMBL" id="BAC65850.1"/>
    </source>
</evidence>
<evidence type="ECO:0000312" key="15">
    <source>
        <dbReference type="MGI" id="MGI:1915913"/>
    </source>
</evidence>
<proteinExistence type="evidence at protein level"/>
<protein>
    <recommendedName>
        <fullName evidence="13">Mitochondrial adenyl nucleotide antiporter SLC25A25</fullName>
    </recommendedName>
    <alternativeName>
        <fullName evidence="8">Short calcium-binding mitochondrial carrier protein 2</fullName>
        <shortName evidence="8">SCaMC-2</shortName>
    </alternativeName>
    <alternativeName>
        <fullName evidence="15">Solute carrier family 25 member 25</fullName>
    </alternativeName>
</protein>
<name>SCMC2_MOUSE</name>
<reference key="1">
    <citation type="journal article" date="2003" name="DNA Res.">
        <title>Prediction of the coding sequences of mouse homologues of KIAA gene: II. The complete nucleotide sequences of 400 mouse KIAA-homologous cDNAs identified by screening of terminal sequences of cDNA clones randomly sampled from size-fractionated libraries.</title>
        <authorList>
            <person name="Okazaki N."/>
            <person name="Kikuno R."/>
            <person name="Ohara R."/>
            <person name="Inamoto S."/>
            <person name="Aizawa H."/>
            <person name="Yuasa S."/>
            <person name="Nakajima D."/>
            <person name="Nagase T."/>
            <person name="Ohara O."/>
            <person name="Koga H."/>
        </authorList>
    </citation>
    <scope>NUCLEOTIDE SEQUENCE [LARGE SCALE MRNA] (ISOFORM 5)</scope>
</reference>
<reference key="2">
    <citation type="journal article" date="2005" name="Science">
        <title>The transcriptional landscape of the mammalian genome.</title>
        <authorList>
            <person name="Carninci P."/>
            <person name="Kasukawa T."/>
            <person name="Katayama S."/>
            <person name="Gough J."/>
            <person name="Frith M.C."/>
            <person name="Maeda N."/>
            <person name="Oyama R."/>
            <person name="Ravasi T."/>
            <person name="Lenhard B."/>
            <person name="Wells C."/>
            <person name="Kodzius R."/>
            <person name="Shimokawa K."/>
            <person name="Bajic V.B."/>
            <person name="Brenner S.E."/>
            <person name="Batalov S."/>
            <person name="Forrest A.R."/>
            <person name="Zavolan M."/>
            <person name="Davis M.J."/>
            <person name="Wilming L.G."/>
            <person name="Aidinis V."/>
            <person name="Allen J.E."/>
            <person name="Ambesi-Impiombato A."/>
            <person name="Apweiler R."/>
            <person name="Aturaliya R.N."/>
            <person name="Bailey T.L."/>
            <person name="Bansal M."/>
            <person name="Baxter L."/>
            <person name="Beisel K.W."/>
            <person name="Bersano T."/>
            <person name="Bono H."/>
            <person name="Chalk A.M."/>
            <person name="Chiu K.P."/>
            <person name="Choudhary V."/>
            <person name="Christoffels A."/>
            <person name="Clutterbuck D.R."/>
            <person name="Crowe M.L."/>
            <person name="Dalla E."/>
            <person name="Dalrymple B.P."/>
            <person name="de Bono B."/>
            <person name="Della Gatta G."/>
            <person name="di Bernardo D."/>
            <person name="Down T."/>
            <person name="Engstrom P."/>
            <person name="Fagiolini M."/>
            <person name="Faulkner G."/>
            <person name="Fletcher C.F."/>
            <person name="Fukushima T."/>
            <person name="Furuno M."/>
            <person name="Futaki S."/>
            <person name="Gariboldi M."/>
            <person name="Georgii-Hemming P."/>
            <person name="Gingeras T.R."/>
            <person name="Gojobori T."/>
            <person name="Green R.E."/>
            <person name="Gustincich S."/>
            <person name="Harbers M."/>
            <person name="Hayashi Y."/>
            <person name="Hensch T.K."/>
            <person name="Hirokawa N."/>
            <person name="Hill D."/>
            <person name="Huminiecki L."/>
            <person name="Iacono M."/>
            <person name="Ikeo K."/>
            <person name="Iwama A."/>
            <person name="Ishikawa T."/>
            <person name="Jakt M."/>
            <person name="Kanapin A."/>
            <person name="Katoh M."/>
            <person name="Kawasawa Y."/>
            <person name="Kelso J."/>
            <person name="Kitamura H."/>
            <person name="Kitano H."/>
            <person name="Kollias G."/>
            <person name="Krishnan S.P."/>
            <person name="Kruger A."/>
            <person name="Kummerfeld S.K."/>
            <person name="Kurochkin I.V."/>
            <person name="Lareau L.F."/>
            <person name="Lazarevic D."/>
            <person name="Lipovich L."/>
            <person name="Liu J."/>
            <person name="Liuni S."/>
            <person name="McWilliam S."/>
            <person name="Madan Babu M."/>
            <person name="Madera M."/>
            <person name="Marchionni L."/>
            <person name="Matsuda H."/>
            <person name="Matsuzawa S."/>
            <person name="Miki H."/>
            <person name="Mignone F."/>
            <person name="Miyake S."/>
            <person name="Morris K."/>
            <person name="Mottagui-Tabar S."/>
            <person name="Mulder N."/>
            <person name="Nakano N."/>
            <person name="Nakauchi H."/>
            <person name="Ng P."/>
            <person name="Nilsson R."/>
            <person name="Nishiguchi S."/>
            <person name="Nishikawa S."/>
            <person name="Nori F."/>
            <person name="Ohara O."/>
            <person name="Okazaki Y."/>
            <person name="Orlando V."/>
            <person name="Pang K.C."/>
            <person name="Pavan W.J."/>
            <person name="Pavesi G."/>
            <person name="Pesole G."/>
            <person name="Petrovsky N."/>
            <person name="Piazza S."/>
            <person name="Reed J."/>
            <person name="Reid J.F."/>
            <person name="Ring B.Z."/>
            <person name="Ringwald M."/>
            <person name="Rost B."/>
            <person name="Ruan Y."/>
            <person name="Salzberg S.L."/>
            <person name="Sandelin A."/>
            <person name="Schneider C."/>
            <person name="Schoenbach C."/>
            <person name="Sekiguchi K."/>
            <person name="Semple C.A."/>
            <person name="Seno S."/>
            <person name="Sessa L."/>
            <person name="Sheng Y."/>
            <person name="Shibata Y."/>
            <person name="Shimada H."/>
            <person name="Shimada K."/>
            <person name="Silva D."/>
            <person name="Sinclair B."/>
            <person name="Sperling S."/>
            <person name="Stupka E."/>
            <person name="Sugiura K."/>
            <person name="Sultana R."/>
            <person name="Takenaka Y."/>
            <person name="Taki K."/>
            <person name="Tammoja K."/>
            <person name="Tan S.L."/>
            <person name="Tang S."/>
            <person name="Taylor M.S."/>
            <person name="Tegner J."/>
            <person name="Teichmann S.A."/>
            <person name="Ueda H.R."/>
            <person name="van Nimwegen E."/>
            <person name="Verardo R."/>
            <person name="Wei C.L."/>
            <person name="Yagi K."/>
            <person name="Yamanishi H."/>
            <person name="Zabarovsky E."/>
            <person name="Zhu S."/>
            <person name="Zimmer A."/>
            <person name="Hide W."/>
            <person name="Bult C."/>
            <person name="Grimmond S.M."/>
            <person name="Teasdale R.D."/>
            <person name="Liu E.T."/>
            <person name="Brusic V."/>
            <person name="Quackenbush J."/>
            <person name="Wahlestedt C."/>
            <person name="Mattick J.S."/>
            <person name="Hume D.A."/>
            <person name="Kai C."/>
            <person name="Sasaki D."/>
            <person name="Tomaru Y."/>
            <person name="Fukuda S."/>
            <person name="Kanamori-Katayama M."/>
            <person name="Suzuki M."/>
            <person name="Aoki J."/>
            <person name="Arakawa T."/>
            <person name="Iida J."/>
            <person name="Imamura K."/>
            <person name="Itoh M."/>
            <person name="Kato T."/>
            <person name="Kawaji H."/>
            <person name="Kawagashira N."/>
            <person name="Kawashima T."/>
            <person name="Kojima M."/>
            <person name="Kondo S."/>
            <person name="Konno H."/>
            <person name="Nakano K."/>
            <person name="Ninomiya N."/>
            <person name="Nishio T."/>
            <person name="Okada M."/>
            <person name="Plessy C."/>
            <person name="Shibata K."/>
            <person name="Shiraki T."/>
            <person name="Suzuki S."/>
            <person name="Tagami M."/>
            <person name="Waki K."/>
            <person name="Watahiki A."/>
            <person name="Okamura-Oho Y."/>
            <person name="Suzuki H."/>
            <person name="Kawai J."/>
            <person name="Hayashizaki Y."/>
        </authorList>
    </citation>
    <scope>NUCLEOTIDE SEQUENCE [LARGE SCALE MRNA] (ISOFORM 2)</scope>
    <source>
        <strain>C57BL/6J</strain>
    </source>
</reference>
<reference key="3">
    <citation type="journal article" date="2009" name="PLoS Biol.">
        <title>Lineage-specific biology revealed by a finished genome assembly of the mouse.</title>
        <authorList>
            <person name="Church D.M."/>
            <person name="Goodstadt L."/>
            <person name="Hillier L.W."/>
            <person name="Zody M.C."/>
            <person name="Goldstein S."/>
            <person name="She X."/>
            <person name="Bult C.J."/>
            <person name="Agarwala R."/>
            <person name="Cherry J.L."/>
            <person name="DiCuccio M."/>
            <person name="Hlavina W."/>
            <person name="Kapustin Y."/>
            <person name="Meric P."/>
            <person name="Maglott D."/>
            <person name="Birtle Z."/>
            <person name="Marques A.C."/>
            <person name="Graves T."/>
            <person name="Zhou S."/>
            <person name="Teague B."/>
            <person name="Potamousis K."/>
            <person name="Churas C."/>
            <person name="Place M."/>
            <person name="Herschleb J."/>
            <person name="Runnheim R."/>
            <person name="Forrest D."/>
            <person name="Amos-Landgraf J."/>
            <person name="Schwartz D.C."/>
            <person name="Cheng Z."/>
            <person name="Lindblad-Toh K."/>
            <person name="Eichler E.E."/>
            <person name="Ponting C.P."/>
        </authorList>
    </citation>
    <scope>NUCLEOTIDE SEQUENCE [LARGE SCALE GENOMIC DNA]</scope>
    <source>
        <strain>C57BL/6J</strain>
    </source>
</reference>
<reference key="4">
    <citation type="journal article" date="2004" name="Genome Res.">
        <title>The status, quality, and expansion of the NIH full-length cDNA project: the Mammalian Gene Collection (MGC).</title>
        <authorList>
            <consortium name="The MGC Project Team"/>
        </authorList>
    </citation>
    <scope>NUCLEOTIDE SEQUENCE [LARGE SCALE MRNA] (ISOFORMS 1; 3 AND 5)</scope>
    <source>
        <strain>C57BL/6J</strain>
        <strain>FVB/N</strain>
        <tissue>Brain</tissue>
        <tissue>Eye</tissue>
        <tissue>Kidney</tissue>
        <tissue>Liver</tissue>
        <tissue>Mammary tumor</tissue>
    </source>
</reference>
<reference key="5">
    <citation type="journal article" date="2004" name="J. Biol. Chem.">
        <title>Identification of a novel human subfamily of mitochondrial carriers with calcium-binding domains.</title>
        <authorList>
            <person name="del Arco A."/>
            <person name="Satrustegui J."/>
        </authorList>
    </citation>
    <scope>SUBCELLULAR LOCATION</scope>
</reference>
<reference key="6">
    <citation type="journal article" date="2010" name="Cell">
        <title>A tissue-specific atlas of mouse protein phosphorylation and expression.</title>
        <authorList>
            <person name="Huttlin E.L."/>
            <person name="Jedrychowski M.P."/>
            <person name="Elias J.E."/>
            <person name="Goswami T."/>
            <person name="Rad R."/>
            <person name="Beausoleil S.A."/>
            <person name="Villen J."/>
            <person name="Haas W."/>
            <person name="Sowa M.E."/>
            <person name="Gygi S.P."/>
        </authorList>
    </citation>
    <scope>IDENTIFICATION BY MASS SPECTROMETRY [LARGE SCALE ANALYSIS]</scope>
    <source>
        <tissue>Brain</tissue>
    </source>
</reference>
<reference key="7">
    <citation type="journal article" date="2011" name="J. Biol. Chem.">
        <title>Inactivation of the mitochondrial carrier SLC25A25 (ATP-Mg2+/Pi transporter) reduces physical endurance and metabolic efficiency in mice.</title>
        <authorList>
            <person name="Anunciado-Koza R.P."/>
            <person name="Zhang J."/>
            <person name="Ukropec J."/>
            <person name="Bajpeyi S."/>
            <person name="Koza R.A."/>
            <person name="Rogers R.C."/>
            <person name="Cefalu W.T."/>
            <person name="Mynatt R.L."/>
            <person name="Kozak L.P."/>
        </authorList>
    </citation>
    <scope>FUNCTION</scope>
    <scope>DISRUPTION PHENOTYPE</scope>
</reference>
<keyword id="KW-0025">Alternative splicing</keyword>
<keyword id="KW-0050">Antiport</keyword>
<keyword id="KW-0106">Calcium</keyword>
<keyword id="KW-0472">Membrane</keyword>
<keyword id="KW-0479">Metal-binding</keyword>
<keyword id="KW-0496">Mitochondrion</keyword>
<keyword id="KW-0999">Mitochondrion inner membrane</keyword>
<keyword id="KW-1185">Reference proteome</keyword>
<keyword id="KW-0677">Repeat</keyword>
<keyword id="KW-0812">Transmembrane</keyword>
<keyword id="KW-1133">Transmembrane helix</keyword>
<keyword id="KW-0813">Transport</keyword>
<organism>
    <name type="scientific">Mus musculus</name>
    <name type="common">Mouse</name>
    <dbReference type="NCBI Taxonomy" id="10090"/>
    <lineage>
        <taxon>Eukaryota</taxon>
        <taxon>Metazoa</taxon>
        <taxon>Chordata</taxon>
        <taxon>Craniata</taxon>
        <taxon>Vertebrata</taxon>
        <taxon>Euteleostomi</taxon>
        <taxon>Mammalia</taxon>
        <taxon>Eutheria</taxon>
        <taxon>Euarchontoglires</taxon>
        <taxon>Glires</taxon>
        <taxon>Rodentia</taxon>
        <taxon>Myomorpha</taxon>
        <taxon>Muroidea</taxon>
        <taxon>Muridae</taxon>
        <taxon>Murinae</taxon>
        <taxon>Mus</taxon>
        <taxon>Mus</taxon>
    </lineage>
</organism>